<proteinExistence type="inferred from homology"/>
<accession>P67514</accession>
<accession>Q8DX02</accession>
<accession>Q8E2V2</accession>
<sequence length="833" mass="93966">MTFYNHKEIEPKWQAFWADNHTFKTGTDASKPKFYALDMFPYPSGAGLHVGHPEGYTATDILSRFKRAQGHNVLHPMGWDAFGLPAEQYAMDTGNDPAEFTAENIANFKRQINALGFSYDWDREVNTTDPNYYKWTQWIFTKLYEKGLAYEAEVPVNWVEELGTAIANEEVLPDGTSERGGYPVVRKPMRQWMLKITAYAERLLEDLEEVDWPESIKDMQRNWIGKSTGANVTFKVKDTDKDFTVFTTRPDTLFGATYAVLAPEHALVDAITTADQAEAVAEYKRQASLKSDLARTDLAKEKTGVWTGAYAINPVNGKEIPVWIADYVLASYGTGAIMAVPAHDERDWEFAKQFNLDIIPVLEGGNVEEAAFTEDGLHINSDFLDGLDKAAAIAKMVEWLEAEGVGNEKVTYRLRDWLFSRQRYWGEPIPIIHWEDGTSTAVPESELPLVLPVTKDIRPSGTGESPLANLTDWLEVTREDGVKGRRETNTMPQWAGSSWYYLRYIDPHNTEKLADEELLKQWLPVDIYVGGAEHAVLHLLYARFWHKVLYDLGVVPTKEPFQKLFNQGMILGTSYRDSRGALVATDKVEKRDGSFFHVETGEELEQAPAKMSKSLKNVVNPDDVVEQYGADTLRVYEMFMGPLDASIAWSEEGLEGSRKFLDRVYRLITTKEITEENSGALDKVYNETVKAVTEQVDQMKFNTAIAQLMVFVNAANKEDKLFSDYAKGFVQLIAPFAPHLGEELWQVLTASGQSISYVPWPSYDESKLVENEIEIVVQIKGKVKAKLVVAKDLSREELQDLALANEKVQAEIAGKDIIKVIAVPNKLVNIVVK</sequence>
<name>SYL_STRA3</name>
<reference key="1">
    <citation type="journal article" date="2002" name="Mol. Microbiol.">
        <title>Genome sequence of Streptococcus agalactiae, a pathogen causing invasive neonatal disease.</title>
        <authorList>
            <person name="Glaser P."/>
            <person name="Rusniok C."/>
            <person name="Buchrieser C."/>
            <person name="Chevalier F."/>
            <person name="Frangeul L."/>
            <person name="Msadek T."/>
            <person name="Zouine M."/>
            <person name="Couve E."/>
            <person name="Lalioui L."/>
            <person name="Poyart C."/>
            <person name="Trieu-Cuot P."/>
            <person name="Kunst F."/>
        </authorList>
    </citation>
    <scope>NUCLEOTIDE SEQUENCE [LARGE SCALE GENOMIC DNA]</scope>
    <source>
        <strain>NEM316</strain>
    </source>
</reference>
<protein>
    <recommendedName>
        <fullName evidence="1">Leucine--tRNA ligase</fullName>
        <ecNumber evidence="1">6.1.1.4</ecNumber>
    </recommendedName>
    <alternativeName>
        <fullName evidence="1">Leucyl-tRNA synthetase</fullName>
        <shortName evidence="1">LeuRS</shortName>
    </alternativeName>
</protein>
<dbReference type="EC" id="6.1.1.4" evidence="1"/>
<dbReference type="EMBL" id="AL766855">
    <property type="protein sequence ID" value="CAD47671.1"/>
    <property type="molecule type" value="Genomic_DNA"/>
</dbReference>
<dbReference type="RefSeq" id="WP_000145178.1">
    <property type="nucleotide sequence ID" value="NC_004368.1"/>
</dbReference>
<dbReference type="SMR" id="P67514"/>
<dbReference type="KEGG" id="san:leuS"/>
<dbReference type="eggNOG" id="COG0495">
    <property type="taxonomic scope" value="Bacteria"/>
</dbReference>
<dbReference type="HOGENOM" id="CLU_004427_0_0_9"/>
<dbReference type="Proteomes" id="UP000000823">
    <property type="component" value="Chromosome"/>
</dbReference>
<dbReference type="GO" id="GO:0005829">
    <property type="term" value="C:cytosol"/>
    <property type="evidence" value="ECO:0007669"/>
    <property type="project" value="TreeGrafter"/>
</dbReference>
<dbReference type="GO" id="GO:0002161">
    <property type="term" value="F:aminoacyl-tRNA deacylase activity"/>
    <property type="evidence" value="ECO:0007669"/>
    <property type="project" value="InterPro"/>
</dbReference>
<dbReference type="GO" id="GO:0005524">
    <property type="term" value="F:ATP binding"/>
    <property type="evidence" value="ECO:0007669"/>
    <property type="project" value="UniProtKB-UniRule"/>
</dbReference>
<dbReference type="GO" id="GO:0004823">
    <property type="term" value="F:leucine-tRNA ligase activity"/>
    <property type="evidence" value="ECO:0007669"/>
    <property type="project" value="UniProtKB-UniRule"/>
</dbReference>
<dbReference type="GO" id="GO:0006429">
    <property type="term" value="P:leucyl-tRNA aminoacylation"/>
    <property type="evidence" value="ECO:0007669"/>
    <property type="project" value="UniProtKB-UniRule"/>
</dbReference>
<dbReference type="CDD" id="cd07958">
    <property type="entry name" value="Anticodon_Ia_Leu_BEm"/>
    <property type="match status" value="1"/>
</dbReference>
<dbReference type="CDD" id="cd00812">
    <property type="entry name" value="LeuRS_core"/>
    <property type="match status" value="1"/>
</dbReference>
<dbReference type="FunFam" id="1.10.730.10:FF:000012">
    <property type="entry name" value="Leucine--tRNA ligase"/>
    <property type="match status" value="1"/>
</dbReference>
<dbReference type="FunFam" id="3.40.50.620:FF:000056">
    <property type="entry name" value="Leucine--tRNA ligase"/>
    <property type="match status" value="1"/>
</dbReference>
<dbReference type="FunFam" id="3.40.50.620:FF:000077">
    <property type="entry name" value="Leucine--tRNA ligase"/>
    <property type="match status" value="1"/>
</dbReference>
<dbReference type="FunFam" id="1.10.730.10:FF:000011">
    <property type="entry name" value="Leucine--tRNA ligase chloroplastic/mitochondrial"/>
    <property type="match status" value="1"/>
</dbReference>
<dbReference type="Gene3D" id="3.40.50.620">
    <property type="entry name" value="HUPs"/>
    <property type="match status" value="2"/>
</dbReference>
<dbReference type="Gene3D" id="1.10.730.10">
    <property type="entry name" value="Isoleucyl-tRNA Synthetase, Domain 1"/>
    <property type="match status" value="1"/>
</dbReference>
<dbReference type="Gene3D" id="3.90.740.10">
    <property type="entry name" value="Valyl/Leucyl/Isoleucyl-tRNA synthetase, editing domain"/>
    <property type="match status" value="1"/>
</dbReference>
<dbReference type="HAMAP" id="MF_00049_B">
    <property type="entry name" value="Leu_tRNA_synth_B"/>
    <property type="match status" value="1"/>
</dbReference>
<dbReference type="InterPro" id="IPR001412">
    <property type="entry name" value="aa-tRNA-synth_I_CS"/>
</dbReference>
<dbReference type="InterPro" id="IPR002300">
    <property type="entry name" value="aa-tRNA-synth_Ia"/>
</dbReference>
<dbReference type="InterPro" id="IPR002302">
    <property type="entry name" value="Leu-tRNA-ligase"/>
</dbReference>
<dbReference type="InterPro" id="IPR025709">
    <property type="entry name" value="Leu_tRNA-synth_edit"/>
</dbReference>
<dbReference type="InterPro" id="IPR013155">
    <property type="entry name" value="M/V/L/I-tRNA-synth_anticd-bd"/>
</dbReference>
<dbReference type="InterPro" id="IPR015413">
    <property type="entry name" value="Methionyl/Leucyl_tRNA_Synth"/>
</dbReference>
<dbReference type="InterPro" id="IPR014729">
    <property type="entry name" value="Rossmann-like_a/b/a_fold"/>
</dbReference>
<dbReference type="InterPro" id="IPR009080">
    <property type="entry name" value="tRNAsynth_Ia_anticodon-bd"/>
</dbReference>
<dbReference type="InterPro" id="IPR009008">
    <property type="entry name" value="Val/Leu/Ile-tRNA-synth_edit"/>
</dbReference>
<dbReference type="NCBIfam" id="TIGR00396">
    <property type="entry name" value="leuS_bact"/>
    <property type="match status" value="1"/>
</dbReference>
<dbReference type="PANTHER" id="PTHR43740:SF2">
    <property type="entry name" value="LEUCINE--TRNA LIGASE, MITOCHONDRIAL"/>
    <property type="match status" value="1"/>
</dbReference>
<dbReference type="PANTHER" id="PTHR43740">
    <property type="entry name" value="LEUCYL-TRNA SYNTHETASE"/>
    <property type="match status" value="1"/>
</dbReference>
<dbReference type="Pfam" id="PF08264">
    <property type="entry name" value="Anticodon_1"/>
    <property type="match status" value="1"/>
</dbReference>
<dbReference type="Pfam" id="PF00133">
    <property type="entry name" value="tRNA-synt_1"/>
    <property type="match status" value="2"/>
</dbReference>
<dbReference type="Pfam" id="PF13603">
    <property type="entry name" value="tRNA-synt_1_2"/>
    <property type="match status" value="1"/>
</dbReference>
<dbReference type="Pfam" id="PF09334">
    <property type="entry name" value="tRNA-synt_1g"/>
    <property type="match status" value="1"/>
</dbReference>
<dbReference type="PRINTS" id="PR00985">
    <property type="entry name" value="TRNASYNTHLEU"/>
</dbReference>
<dbReference type="SUPFAM" id="SSF47323">
    <property type="entry name" value="Anticodon-binding domain of a subclass of class I aminoacyl-tRNA synthetases"/>
    <property type="match status" value="1"/>
</dbReference>
<dbReference type="SUPFAM" id="SSF52374">
    <property type="entry name" value="Nucleotidylyl transferase"/>
    <property type="match status" value="1"/>
</dbReference>
<dbReference type="SUPFAM" id="SSF50677">
    <property type="entry name" value="ValRS/IleRS/LeuRS editing domain"/>
    <property type="match status" value="1"/>
</dbReference>
<dbReference type="PROSITE" id="PS00178">
    <property type="entry name" value="AA_TRNA_LIGASE_I"/>
    <property type="match status" value="1"/>
</dbReference>
<feature type="chain" id="PRO_0000152090" description="Leucine--tRNA ligase">
    <location>
        <begin position="1"/>
        <end position="833"/>
    </location>
</feature>
<feature type="short sequence motif" description="'HIGH' region">
    <location>
        <begin position="41"/>
        <end position="52"/>
    </location>
</feature>
<feature type="short sequence motif" description="'KMSKS' region">
    <location>
        <begin position="610"/>
        <end position="614"/>
    </location>
</feature>
<feature type="binding site" evidence="1">
    <location>
        <position position="613"/>
    </location>
    <ligand>
        <name>ATP</name>
        <dbReference type="ChEBI" id="CHEBI:30616"/>
    </ligand>
</feature>
<keyword id="KW-0030">Aminoacyl-tRNA synthetase</keyword>
<keyword id="KW-0067">ATP-binding</keyword>
<keyword id="KW-0963">Cytoplasm</keyword>
<keyword id="KW-0436">Ligase</keyword>
<keyword id="KW-0547">Nucleotide-binding</keyword>
<keyword id="KW-0648">Protein biosynthesis</keyword>
<comment type="catalytic activity">
    <reaction evidence="1">
        <text>tRNA(Leu) + L-leucine + ATP = L-leucyl-tRNA(Leu) + AMP + diphosphate</text>
        <dbReference type="Rhea" id="RHEA:11688"/>
        <dbReference type="Rhea" id="RHEA-COMP:9613"/>
        <dbReference type="Rhea" id="RHEA-COMP:9622"/>
        <dbReference type="ChEBI" id="CHEBI:30616"/>
        <dbReference type="ChEBI" id="CHEBI:33019"/>
        <dbReference type="ChEBI" id="CHEBI:57427"/>
        <dbReference type="ChEBI" id="CHEBI:78442"/>
        <dbReference type="ChEBI" id="CHEBI:78494"/>
        <dbReference type="ChEBI" id="CHEBI:456215"/>
        <dbReference type="EC" id="6.1.1.4"/>
    </reaction>
</comment>
<comment type="subcellular location">
    <subcellularLocation>
        <location evidence="1">Cytoplasm</location>
    </subcellularLocation>
</comment>
<comment type="similarity">
    <text evidence="1">Belongs to the class-I aminoacyl-tRNA synthetase family.</text>
</comment>
<gene>
    <name evidence="1" type="primary">leuS</name>
    <name type="ordered locus">gbs2012</name>
</gene>
<evidence type="ECO:0000255" key="1">
    <source>
        <dbReference type="HAMAP-Rule" id="MF_00049"/>
    </source>
</evidence>
<organism>
    <name type="scientific">Streptococcus agalactiae serotype III (strain NEM316)</name>
    <dbReference type="NCBI Taxonomy" id="211110"/>
    <lineage>
        <taxon>Bacteria</taxon>
        <taxon>Bacillati</taxon>
        <taxon>Bacillota</taxon>
        <taxon>Bacilli</taxon>
        <taxon>Lactobacillales</taxon>
        <taxon>Streptococcaceae</taxon>
        <taxon>Streptococcus</taxon>
    </lineage>
</organism>